<reference key="1">
    <citation type="journal article" date="2004" name="Toxicon">
        <title>Characterisation of major peptides in 'jack jumper' ant venom by mass spectrometry.</title>
        <authorList>
            <person name="Davies N.W."/>
            <person name="Wiese M.D."/>
            <person name="Brown S.G.A."/>
        </authorList>
    </citation>
    <scope>PROTEIN SEQUENCE</scope>
    <scope>MASS SPECTROMETRY</scope>
    <scope>AMIDATION AT GLN-23</scope>
    <scope>SUBUNIT</scope>
    <scope>SUBCELLULAR LOCATION</scope>
    <scope>DISULFIDE BOND</scope>
    <source>
        <tissue>Venom</tissue>
    </source>
</reference>
<reference key="2">
    <citation type="journal article" date="2016" name="Toxins">
        <title>The biochemical toxin arsenal from ant venoms.</title>
        <authorList>
            <person name="Touchard A."/>
            <person name="Aili S.R."/>
            <person name="Fox E.G."/>
            <person name="Escoubas P."/>
            <person name="Orivel J."/>
            <person name="Nicholson G.M."/>
            <person name="Dejean A."/>
        </authorList>
    </citation>
    <scope>REVIEW</scope>
    <scope>NOMENCLATURE</scope>
</reference>
<reference key="3">
    <citation type="journal article" date="2020" name="Biomedicines">
        <title>It takes two: dimerization is essential for the broad-spectrum predatory and defensive activities of the venom peptide Mp1a from the jack jumper ant Myrmecia pilosula.</title>
        <authorList>
            <person name="Nixon S.A."/>
            <person name="Dekan Z."/>
            <person name="Robinson S.D."/>
            <person name="Guo S."/>
            <person name="Vetter I."/>
            <person name="Kotze A.C."/>
            <person name="Alewood P.F."/>
            <person name="King G.F."/>
            <person name="Herzig V."/>
        </authorList>
    </citation>
    <scope>FUNCTION</scope>
    <scope>SYNTHESIS OF 49-74 IN COMPLEX WITH A CHAIN</scope>
    <scope>BIOASSAY</scope>
    <scope>TOXIC DOSE</scope>
</reference>
<reference key="4">
    <citation type="journal article" date="2017" name="Angew. Chem. Int. Ed.">
        <title>Delta-myrtoxin-Mp1a is a helical heterodimer from the venom of the jack jumper ant that has antimicrobial, membrane-disrupting, and nociceptive activities.</title>
        <authorList>
            <person name="Dekan Z."/>
            <person name="Headey S.J."/>
            <person name="Scanlon M."/>
            <person name="Baldo B.A."/>
            <person name="Lee T.H."/>
            <person name="Aguilar M.I."/>
            <person name="Deuis J.R."/>
            <person name="Vetter I."/>
            <person name="Elliott A.G."/>
            <person name="Amado M."/>
            <person name="Cooper M.A."/>
            <person name="Alewood D."/>
            <person name="Alewood P.F."/>
        </authorList>
    </citation>
    <scope>STRUCTURE BY NMR IN COMPLEX WITH A CHAIN</scope>
    <scope>FUNCTION</scope>
    <scope>SYNTHESIS OF COMPLEX WITH A CHAIN</scope>
    <scope>BIOASSAY</scope>
</reference>
<feature type="peptide" id="PRO_0000044533" description="M-myrmeciitoxin-Mp2b" evidence="1">
    <location>
        <begin position="1"/>
        <end position="23"/>
    </location>
</feature>
<feature type="modified residue" description="Glutamine amide" evidence="1">
    <location>
        <position position="23"/>
    </location>
</feature>
<feature type="disulfide bond" description="Interchain (with C-71 in M-MIITX-Mp2a)" evidence="1">
    <location>
        <position position="10"/>
    </location>
</feature>
<feature type="disulfide bond" description="Interchain (with C-64 in M-MIITX-Mp2a)" evidence="1">
    <location>
        <position position="17"/>
    </location>
</feature>
<sequence>LIGLVSKGTCVLVKTVCKKVLKQ</sequence>
<proteinExistence type="evidence at protein level"/>
<comment type="function">
    <text evidence="2 3">Heterodimer protein that may serve both defensive (pain-inducing) and predatory (insecticidal) roles (PubMed:28513074). Has membrane-disrupting activity and shows induction of non-specific calcium influx into cells, (PubMed:28513074). Shows broad-spectrum activity against a diverse range of bacteria, and cell lines, as well as hemolytic activity (EC(50)=2.18 uM) (PubMed:28513074). In vivo, shows moderate insecticidal activity against D.melanogaster and potent anthelmintic activity against the veterinary nematode H.contortus (PubMed:32629771). In addition, intraplantar injection into mice induces nocifensive behavior and mechanical allodynia (PubMed:28513074).</text>
</comment>
<comment type="subunit">
    <text evidence="1">Heterodimer with M-MIITX-Mp2a (pilosulin-3a) (AC Q26464); disulfide-linked (PubMed:15019477). Only heterodimers (and not monomers) have been identified in the venom (PubMed:15019477).</text>
</comment>
<comment type="subcellular location">
    <subcellularLocation>
        <location evidence="1">Secreted</location>
    </subcellularLocation>
</comment>
<comment type="tissue specificity">
    <text evidence="8">Expressed by the venom gland.</text>
</comment>
<comment type="mass spectrometry"/>
<comment type="allergen">
    <text evidence="1">The heterodimer causes an allergic reaction in human. Binds to IgE. It is speculated that the antigenic site is on the A chain.</text>
</comment>
<comment type="toxic dose">
    <text evidence="3">LD(50) of the heterodimer is 260.1 +- 16.6 pmol/g towards D.melanogaster.</text>
</comment>
<comment type="miscellaneous">
    <text evidence="9 10">Dekan et al., 2017 and Nixon et al., 2020 report synthesis and functional analysis of heterodimers with different disulfide patterns as well as different A and B chain monomeric forms.</text>
</comment>
<comment type="similarity">
    <text evidence="7">Belongs to the formicidae venom precursor-01 superfamily. Ant pilosulin family.</text>
</comment>
<organism>
    <name type="scientific">Myrmecia pilosula</name>
    <name type="common">Jack jumper ant</name>
    <name type="synonym">Australian jumper ant</name>
    <dbReference type="NCBI Taxonomy" id="13618"/>
    <lineage>
        <taxon>Eukaryota</taxon>
        <taxon>Metazoa</taxon>
        <taxon>Ecdysozoa</taxon>
        <taxon>Arthropoda</taxon>
        <taxon>Hexapoda</taxon>
        <taxon>Insecta</taxon>
        <taxon>Pterygota</taxon>
        <taxon>Neoptera</taxon>
        <taxon>Endopterygota</taxon>
        <taxon>Hymenoptera</taxon>
        <taxon>Apocrita</taxon>
        <taxon>Aculeata</taxon>
        <taxon>Formicoidea</taxon>
        <taxon>Formicidae</taxon>
        <taxon>Myrmeciinae</taxon>
        <taxon>Myrmeciini</taxon>
        <taxon>Myrmecia</taxon>
    </lineage>
</organism>
<dbReference type="Allergome" id="3381">
    <property type="allergen name" value="Myr p 2.0101"/>
</dbReference>
<dbReference type="Allergome" id="3575">
    <property type="allergen name" value="Myr p 2.0102"/>
</dbReference>
<dbReference type="Allergome" id="481">
    <property type="allergen name" value="Myr p 2"/>
</dbReference>
<dbReference type="GO" id="GO:0005576">
    <property type="term" value="C:extracellular region"/>
    <property type="evidence" value="ECO:0007669"/>
    <property type="project" value="UniProtKB-SubCell"/>
</dbReference>
<dbReference type="GO" id="GO:0090729">
    <property type="term" value="F:toxin activity"/>
    <property type="evidence" value="ECO:0007669"/>
    <property type="project" value="UniProtKB-KW"/>
</dbReference>
<dbReference type="GO" id="GO:0042742">
    <property type="term" value="P:defense response to bacterium"/>
    <property type="evidence" value="ECO:0007669"/>
    <property type="project" value="UniProtKB-KW"/>
</dbReference>
<dbReference type="GO" id="GO:0031640">
    <property type="term" value="P:killing of cells of another organism"/>
    <property type="evidence" value="ECO:0007669"/>
    <property type="project" value="UniProtKB-KW"/>
</dbReference>
<protein>
    <recommendedName>
        <fullName evidence="5">M-myrmeciitoxin-Mp2b</fullName>
        <shortName evidence="5">M-MIITX-Mp2b</shortName>
    </recommendedName>
    <alternativeName>
        <fullName evidence="6">DELTA-myrtoxin-Mp1a B chain</fullName>
        <shortName evidence="6">Mp1a B chain</shortName>
    </alternativeName>
    <alternativeName>
        <fullName evidence="7">Pilosin-3 subunit b</fullName>
        <shortName evidence="4">Pilosulin-3b</shortName>
    </alternativeName>
</protein>
<keyword id="KW-0020">Allergen</keyword>
<keyword id="KW-0027">Amidation</keyword>
<keyword id="KW-0044">Antibiotic</keyword>
<keyword id="KW-0929">Antimicrobial</keyword>
<keyword id="KW-0204">Cytolysis</keyword>
<keyword id="KW-0903">Direct protein sequencing</keyword>
<keyword id="KW-1015">Disulfide bond</keyword>
<keyword id="KW-0354">Hemolysis</keyword>
<keyword id="KW-0964">Secreted</keyword>
<keyword id="KW-0800">Toxin</keyword>
<evidence type="ECO:0000269" key="1">
    <source>
    </source>
</evidence>
<evidence type="ECO:0000269" key="2">
    <source>
    </source>
</evidence>
<evidence type="ECO:0000269" key="3">
    <source>
    </source>
</evidence>
<evidence type="ECO:0000303" key="4">
    <source>
    </source>
</evidence>
<evidence type="ECO:0000303" key="5">
    <source>
    </source>
</evidence>
<evidence type="ECO:0000303" key="6">
    <source>
    </source>
</evidence>
<evidence type="ECO:0000305" key="7"/>
<evidence type="ECO:0000305" key="8">
    <source>
    </source>
</evidence>
<evidence type="ECO:0000305" key="9">
    <source>
    </source>
</evidence>
<evidence type="ECO:0000305" key="10">
    <source>
    </source>
</evidence>
<accession>P0C023</accession>
<name>TX2B_MYRPI</name>